<dbReference type="EC" id="5.3.1.-"/>
<dbReference type="EMBL" id="GG704913">
    <property type="protein sequence ID" value="EAS29186.1"/>
    <property type="molecule type" value="Genomic_DNA"/>
</dbReference>
<dbReference type="RefSeq" id="XP_001240769.1">
    <property type="nucleotide sequence ID" value="XM_001240768.1"/>
</dbReference>
<dbReference type="PDB" id="3QD5">
    <property type="method" value="X-ray"/>
    <property type="resolution" value="1.90 A"/>
    <property type="chains" value="A/B=1-163"/>
</dbReference>
<dbReference type="PDB" id="3SDW">
    <property type="method" value="X-ray"/>
    <property type="resolution" value="1.80 A"/>
    <property type="chains" value="A=1-163"/>
</dbReference>
<dbReference type="PDB" id="3SGW">
    <property type="method" value="X-ray"/>
    <property type="resolution" value="1.70 A"/>
    <property type="chains" value="A=1-163"/>
</dbReference>
<dbReference type="PDBsum" id="3QD5"/>
<dbReference type="PDBsum" id="3SDW"/>
<dbReference type="PDBsum" id="3SGW"/>
<dbReference type="SMR" id="P0CL19"/>
<dbReference type="STRING" id="246410.P0CL19"/>
<dbReference type="GeneID" id="4559626"/>
<dbReference type="KEGG" id="cim:CIMG_07932"/>
<dbReference type="VEuPathDB" id="FungiDB:CIMG_07932"/>
<dbReference type="InParanoid" id="P0CL19"/>
<dbReference type="OMA" id="YPPFCLR"/>
<dbReference type="OrthoDB" id="2106730at2759"/>
<dbReference type="BRENDA" id="5.3.1.6">
    <property type="organism ID" value="1544"/>
</dbReference>
<dbReference type="EvolutionaryTrace" id="P0CL19"/>
<dbReference type="Proteomes" id="UP000001261">
    <property type="component" value="Unassembled WGS sequence"/>
</dbReference>
<dbReference type="GO" id="GO:0016853">
    <property type="term" value="F:isomerase activity"/>
    <property type="evidence" value="ECO:0007669"/>
    <property type="project" value="UniProtKB-KW"/>
</dbReference>
<dbReference type="GO" id="GO:0005975">
    <property type="term" value="P:carbohydrate metabolic process"/>
    <property type="evidence" value="ECO:0007669"/>
    <property type="project" value="InterPro"/>
</dbReference>
<dbReference type="FunFam" id="3.40.1400.10:FF:000004">
    <property type="entry name" value="Ribose 5-phosphate isomerase"/>
    <property type="match status" value="1"/>
</dbReference>
<dbReference type="Gene3D" id="3.40.1400.10">
    <property type="entry name" value="Sugar-phosphate isomerase, RpiB/LacA/LacB"/>
    <property type="match status" value="1"/>
</dbReference>
<dbReference type="InterPro" id="IPR011860">
    <property type="entry name" value="Rib-5-P_Isoase_Actino"/>
</dbReference>
<dbReference type="InterPro" id="IPR003500">
    <property type="entry name" value="RpiB_LacA_LacB"/>
</dbReference>
<dbReference type="InterPro" id="IPR036569">
    <property type="entry name" value="RpiB_LacA_LacB_sf"/>
</dbReference>
<dbReference type="InterPro" id="IPR051812">
    <property type="entry name" value="SPI_LacAB/RpiB"/>
</dbReference>
<dbReference type="NCBIfam" id="NF004051">
    <property type="entry name" value="PRK05571.1"/>
    <property type="match status" value="1"/>
</dbReference>
<dbReference type="NCBIfam" id="TIGR02133">
    <property type="entry name" value="RPI_actino"/>
    <property type="match status" value="1"/>
</dbReference>
<dbReference type="NCBIfam" id="TIGR00689">
    <property type="entry name" value="rpiB_lacA_lacB"/>
    <property type="match status" value="1"/>
</dbReference>
<dbReference type="PANTHER" id="PTHR43732:SF1">
    <property type="entry name" value="RIBOSE 5-PHOSPHATE ISOMERASE"/>
    <property type="match status" value="1"/>
</dbReference>
<dbReference type="PANTHER" id="PTHR43732">
    <property type="entry name" value="RIBOSE 5-PHOSPHATE ISOMERASE-RELATED"/>
    <property type="match status" value="1"/>
</dbReference>
<dbReference type="Pfam" id="PF02502">
    <property type="entry name" value="LacAB_rpiB"/>
    <property type="match status" value="1"/>
</dbReference>
<dbReference type="PIRSF" id="PIRSF005384">
    <property type="entry name" value="RpiB_LacA_B"/>
    <property type="match status" value="1"/>
</dbReference>
<dbReference type="SUPFAM" id="SSF89623">
    <property type="entry name" value="Ribose/Galactose isomerase RpiB/AlsB"/>
    <property type="match status" value="1"/>
</dbReference>
<gene>
    <name type="ORF">CIMG_07932</name>
</gene>
<keyword id="KW-0002">3D-structure</keyword>
<keyword id="KW-0413">Isomerase</keyword>
<keyword id="KW-1185">Reference proteome</keyword>
<organism>
    <name type="scientific">Coccidioides immitis (strain RS)</name>
    <name type="common">Valley fever fungus</name>
    <dbReference type="NCBI Taxonomy" id="246410"/>
    <lineage>
        <taxon>Eukaryota</taxon>
        <taxon>Fungi</taxon>
        <taxon>Dikarya</taxon>
        <taxon>Ascomycota</taxon>
        <taxon>Pezizomycotina</taxon>
        <taxon>Eurotiomycetes</taxon>
        <taxon>Eurotiomycetidae</taxon>
        <taxon>Onygenales</taxon>
        <taxon>Onygenaceae</taxon>
        <taxon>Coccidioides</taxon>
    </lineage>
</organism>
<reference key="1">
    <citation type="journal article" date="2009" name="Genome Res.">
        <title>Comparative genomic analyses of the human fungal pathogens Coccidioides and their relatives.</title>
        <authorList>
            <person name="Sharpton T.J."/>
            <person name="Stajich J.E."/>
            <person name="Rounsley S.D."/>
            <person name="Gardner M.J."/>
            <person name="Wortman J.R."/>
            <person name="Jordar V.S."/>
            <person name="Maiti R."/>
            <person name="Kodira C.D."/>
            <person name="Neafsey D.E."/>
            <person name="Zeng Q."/>
            <person name="Hung C.-Y."/>
            <person name="McMahan C."/>
            <person name="Muszewska A."/>
            <person name="Grynberg M."/>
            <person name="Mandel M.A."/>
            <person name="Kellner E.M."/>
            <person name="Barker B.M."/>
            <person name="Galgiani J.N."/>
            <person name="Orbach M.J."/>
            <person name="Kirkland T.N."/>
            <person name="Cole G.T."/>
            <person name="Henn M.R."/>
            <person name="Birren B.W."/>
            <person name="Taylor J.W."/>
        </authorList>
    </citation>
    <scope>NUCLEOTIDE SEQUENCE [LARGE SCALE GENOMIC DNA]</scope>
    <source>
        <strain>RS</strain>
    </source>
</reference>
<reference key="2">
    <citation type="journal article" date="2010" name="Genome Res.">
        <title>Population genomic sequencing of Coccidioides fungi reveals recent hybridization and transposon control.</title>
        <authorList>
            <person name="Neafsey D.E."/>
            <person name="Barker B.M."/>
            <person name="Sharpton T.J."/>
            <person name="Stajich J.E."/>
            <person name="Park D.J."/>
            <person name="Whiston E."/>
            <person name="Hung C.-Y."/>
            <person name="McMahan C."/>
            <person name="White J."/>
            <person name="Sykes S."/>
            <person name="Heiman D."/>
            <person name="Young S."/>
            <person name="Zeng Q."/>
            <person name="Abouelleil A."/>
            <person name="Aftuck L."/>
            <person name="Bessette D."/>
            <person name="Brown A."/>
            <person name="FitzGerald M."/>
            <person name="Lui A."/>
            <person name="Macdonald J.P."/>
            <person name="Priest M."/>
            <person name="Orbach M.J."/>
            <person name="Galgiani J.N."/>
            <person name="Kirkland T.N."/>
            <person name="Cole G.T."/>
            <person name="Birren B.W."/>
            <person name="Henn M.R."/>
            <person name="Taylor J.W."/>
            <person name="Rounsley S.D."/>
        </authorList>
    </citation>
    <scope>GENOME REANNOTATION</scope>
    <source>
        <strain>RS</strain>
    </source>
</reference>
<reference key="3">
    <citation type="journal article" date="2011" name="BMC Struct. Biol.">
        <title>Structural characterization of a ribose-5-phosphate isomerase B from the pathogenic fungus Coccidioides immitis.</title>
        <authorList>
            <person name="Edwards T.E."/>
            <person name="Abramov A.B."/>
            <person name="Smith E.R."/>
            <person name="Baydo R.O."/>
            <person name="Leonard J.T."/>
            <person name="Leibly D.J."/>
            <person name="Thompkins K.B."/>
            <person name="Clifton M.C."/>
            <person name="Gardberg A.S."/>
            <person name="Staker B.L."/>
            <person name="Van Voorhis W.C."/>
            <person name="Myler P.J."/>
            <person name="Stewart L.J."/>
        </authorList>
    </citation>
    <scope>X-RAY CRYSTALLOGRAPHY (1.7 ANGSTROMS) IN COMPLEX WITH SUBSTRATE ANALOGS</scope>
    <scope>SUBUNIT</scope>
    <scope>ACTIVE SITE</scope>
</reference>
<feature type="chain" id="PRO_0000405565" description="Putative ribose 5-phosphate isomerase">
    <location>
        <begin position="1"/>
        <end position="163"/>
    </location>
</feature>
<feature type="active site" description="Proton acceptor" evidence="4 5">
    <location>
        <position position="76"/>
    </location>
</feature>
<feature type="binding site" evidence="2 5">
    <location>
        <begin position="16"/>
        <end position="17"/>
    </location>
    <ligand>
        <name>D-ribulose 5-phosphate</name>
        <dbReference type="ChEBI" id="CHEBI:58121"/>
    </ligand>
</feature>
<feature type="binding site" evidence="2 5">
    <location>
        <begin position="77"/>
        <end position="81"/>
    </location>
    <ligand>
        <name>D-ribulose 5-phosphate</name>
        <dbReference type="ChEBI" id="CHEBI:58121"/>
    </ligand>
</feature>
<feature type="binding site" evidence="1">
    <location>
        <position position="110"/>
    </location>
    <ligand>
        <name>D-ribulose 5-phosphate</name>
        <dbReference type="ChEBI" id="CHEBI:58121"/>
    </ligand>
</feature>
<feature type="binding site" evidence="1">
    <location>
        <position position="120"/>
    </location>
    <ligand>
        <name>D-ribulose 5-phosphate</name>
        <dbReference type="ChEBI" id="CHEBI:58121"/>
    </ligand>
</feature>
<feature type="binding site" evidence="1">
    <location>
        <position position="148"/>
    </location>
    <ligand>
        <name>D-ribulose 5-phosphate</name>
        <dbReference type="ChEBI" id="CHEBI:58121"/>
    </ligand>
</feature>
<feature type="strand" evidence="7">
    <location>
        <begin position="9"/>
        <end position="15"/>
    </location>
</feature>
<feature type="helix" evidence="7">
    <location>
        <begin position="17"/>
        <end position="19"/>
    </location>
</feature>
<feature type="helix" evidence="7">
    <location>
        <begin position="20"/>
        <end position="30"/>
    </location>
</feature>
<feature type="strand" evidence="7">
    <location>
        <begin position="36"/>
        <end position="41"/>
    </location>
</feature>
<feature type="helix" evidence="7">
    <location>
        <begin position="53"/>
        <end position="65"/>
    </location>
</feature>
<feature type="strand" evidence="7">
    <location>
        <begin position="70"/>
        <end position="79"/>
    </location>
</feature>
<feature type="helix" evidence="7">
    <location>
        <begin position="80"/>
        <end position="87"/>
    </location>
</feature>
<feature type="strand" evidence="7">
    <location>
        <begin position="94"/>
        <end position="96"/>
    </location>
</feature>
<feature type="helix" evidence="7">
    <location>
        <begin position="100"/>
        <end position="108"/>
    </location>
</feature>
<feature type="strand" evidence="7">
    <location>
        <begin position="113"/>
        <end position="118"/>
    </location>
</feature>
<feature type="turn" evidence="7">
    <location>
        <begin position="119"/>
        <end position="121"/>
    </location>
</feature>
<feature type="helix" evidence="7">
    <location>
        <begin position="124"/>
        <end position="134"/>
    </location>
</feature>
<feature type="helix" evidence="7">
    <location>
        <begin position="144"/>
        <end position="156"/>
    </location>
</feature>
<feature type="strand" evidence="6">
    <location>
        <begin position="159"/>
        <end position="161"/>
    </location>
</feature>
<evidence type="ECO:0000250" key="1">
    <source>
        <dbReference type="UniProtKB" id="P9WKD7"/>
    </source>
</evidence>
<evidence type="ECO:0000269" key="2">
    <source>
    </source>
</evidence>
<evidence type="ECO:0000305" key="3"/>
<evidence type="ECO:0000305" key="4">
    <source>
    </source>
</evidence>
<evidence type="ECO:0007744" key="5">
    <source>
        <dbReference type="PDB" id="3SGW"/>
    </source>
</evidence>
<evidence type="ECO:0007829" key="6">
    <source>
        <dbReference type="PDB" id="3QD5"/>
    </source>
</evidence>
<evidence type="ECO:0007829" key="7">
    <source>
        <dbReference type="PDB" id="3SGW"/>
    </source>
</evidence>
<protein>
    <recommendedName>
        <fullName>Putative ribose 5-phosphate isomerase</fullName>
        <ecNumber>5.3.1.-</ecNumber>
    </recommendedName>
</protein>
<accession>P0CL19</accession>
<accession>A0A0E1RWN9</accession>
<accession>J3K544</accession>
<proteinExistence type="evidence at protein level"/>
<comment type="subunit">
    <text evidence="4">Homodimer or homotetramer.</text>
</comment>
<comment type="similarity">
    <text evidence="3">Belongs to the LacAB/RpiB family.</text>
</comment>
<name>RPIB_COCIM</name>
<sequence>MAATPLPPLRLAIACDDAGVSYKEALKAHLSDNPLVSSITDVGVTSTTDKTAYPHVAIQAAQLIKDGKVDRALMICGTGLGVAISANKVPGIRAVTAHDTFSVERAILSNDAQVLCFGQRVIGIELAKRLAGEWLTYRFDQKSASAQKVQAISDYEKKFVEVN</sequence>